<protein>
    <recommendedName>
        <fullName evidence="1">Sulfate transporter CysZ</fullName>
    </recommendedName>
</protein>
<evidence type="ECO:0000255" key="1">
    <source>
        <dbReference type="HAMAP-Rule" id="MF_00468"/>
    </source>
</evidence>
<accession>P45039</accession>
<keyword id="KW-0028">Amino-acid biosynthesis</keyword>
<keyword id="KW-0997">Cell inner membrane</keyword>
<keyword id="KW-1003">Cell membrane</keyword>
<keyword id="KW-0198">Cysteine biosynthesis</keyword>
<keyword id="KW-0472">Membrane</keyword>
<keyword id="KW-1185">Reference proteome</keyword>
<keyword id="KW-0764">Sulfate transport</keyword>
<keyword id="KW-0812">Transmembrane</keyword>
<keyword id="KW-1133">Transmembrane helix</keyword>
<keyword id="KW-0813">Transport</keyword>
<gene>
    <name evidence="1" type="primary">cysZ</name>
    <name type="ordered locus">HI_1102</name>
</gene>
<comment type="function">
    <text evidence="1">High affinity, high specificity proton-dependent sulfate transporter, which mediates sulfate uptake. Provides the sulfur source for the cysteine synthesis pathway.</text>
</comment>
<comment type="subcellular location">
    <subcellularLocation>
        <location evidence="1">Cell inner membrane</location>
        <topology evidence="1">Multi-pass membrane protein</topology>
    </subcellularLocation>
</comment>
<comment type="similarity">
    <text evidence="1">Belongs to the CysZ family.</text>
</comment>
<dbReference type="EMBL" id="L42023">
    <property type="protein sequence ID" value="AAC22757.1"/>
    <property type="molecule type" value="Genomic_DNA"/>
</dbReference>
<dbReference type="PIR" id="E64182">
    <property type="entry name" value="E64182"/>
</dbReference>
<dbReference type="RefSeq" id="NP_439259.1">
    <property type="nucleotide sequence ID" value="NC_000907.1"/>
</dbReference>
<dbReference type="SMR" id="P45039"/>
<dbReference type="STRING" id="71421.HI_1102"/>
<dbReference type="EnsemblBacteria" id="AAC22757">
    <property type="protein sequence ID" value="AAC22757"/>
    <property type="gene ID" value="HI_1102"/>
</dbReference>
<dbReference type="KEGG" id="hin:HI_1102"/>
<dbReference type="PATRIC" id="fig|71421.8.peg.1148"/>
<dbReference type="eggNOG" id="COG2981">
    <property type="taxonomic scope" value="Bacteria"/>
</dbReference>
<dbReference type="HOGENOM" id="CLU_070331_1_0_6"/>
<dbReference type="OrthoDB" id="5292355at2"/>
<dbReference type="PhylomeDB" id="P45039"/>
<dbReference type="BioCyc" id="HINF71421:G1GJ1-1137-MONOMER"/>
<dbReference type="Proteomes" id="UP000000579">
    <property type="component" value="Chromosome"/>
</dbReference>
<dbReference type="GO" id="GO:0005886">
    <property type="term" value="C:plasma membrane"/>
    <property type="evidence" value="ECO:0000318"/>
    <property type="project" value="GO_Central"/>
</dbReference>
<dbReference type="GO" id="GO:0009675">
    <property type="term" value="F:high-affinity sulfate:proton symporter activity"/>
    <property type="evidence" value="ECO:0000318"/>
    <property type="project" value="GO_Central"/>
</dbReference>
<dbReference type="GO" id="GO:0019344">
    <property type="term" value="P:cysteine biosynthetic process"/>
    <property type="evidence" value="ECO:0000318"/>
    <property type="project" value="GO_Central"/>
</dbReference>
<dbReference type="GO" id="GO:0000103">
    <property type="term" value="P:sulfate assimilation"/>
    <property type="evidence" value="ECO:0000318"/>
    <property type="project" value="GO_Central"/>
</dbReference>
<dbReference type="HAMAP" id="MF_00468">
    <property type="entry name" value="CysZ"/>
    <property type="match status" value="1"/>
</dbReference>
<dbReference type="InterPro" id="IPR050480">
    <property type="entry name" value="CysZ_sulfate_transptr"/>
</dbReference>
<dbReference type="InterPro" id="IPR022985">
    <property type="entry name" value="Sulfate_CysZ"/>
</dbReference>
<dbReference type="NCBIfam" id="NF003433">
    <property type="entry name" value="PRK04949.1"/>
    <property type="match status" value="1"/>
</dbReference>
<dbReference type="PANTHER" id="PTHR37468">
    <property type="entry name" value="SULFATE TRANSPORTER CYSZ"/>
    <property type="match status" value="1"/>
</dbReference>
<dbReference type="PANTHER" id="PTHR37468:SF1">
    <property type="entry name" value="SULFATE TRANSPORTER CYSZ"/>
    <property type="match status" value="1"/>
</dbReference>
<dbReference type="Pfam" id="PF07264">
    <property type="entry name" value="EI24"/>
    <property type="match status" value="1"/>
</dbReference>
<feature type="chain" id="PRO_0000204340" description="Sulfate transporter CysZ">
    <location>
        <begin position="1"/>
        <end position="272"/>
    </location>
</feature>
<feature type="transmembrane region" description="Helical" evidence="1">
    <location>
        <begin position="29"/>
        <end position="49"/>
    </location>
</feature>
<feature type="transmembrane region" description="Helical" evidence="1">
    <location>
        <begin position="66"/>
        <end position="86"/>
    </location>
</feature>
<feature type="transmembrane region" description="Helical" evidence="1">
    <location>
        <begin position="148"/>
        <end position="168"/>
    </location>
</feature>
<feature type="transmembrane region" description="Helical" evidence="1">
    <location>
        <begin position="219"/>
        <end position="239"/>
    </location>
</feature>
<reference key="1">
    <citation type="journal article" date="1995" name="Science">
        <title>Whole-genome random sequencing and assembly of Haemophilus influenzae Rd.</title>
        <authorList>
            <person name="Fleischmann R.D."/>
            <person name="Adams M.D."/>
            <person name="White O."/>
            <person name="Clayton R.A."/>
            <person name="Kirkness E.F."/>
            <person name="Kerlavage A.R."/>
            <person name="Bult C.J."/>
            <person name="Tomb J.-F."/>
            <person name="Dougherty B.A."/>
            <person name="Merrick J.M."/>
            <person name="McKenney K."/>
            <person name="Sutton G.G."/>
            <person name="FitzHugh W."/>
            <person name="Fields C.A."/>
            <person name="Gocayne J.D."/>
            <person name="Scott J.D."/>
            <person name="Shirley R."/>
            <person name="Liu L.-I."/>
            <person name="Glodek A."/>
            <person name="Kelley J.M."/>
            <person name="Weidman J.F."/>
            <person name="Phillips C.A."/>
            <person name="Spriggs T."/>
            <person name="Hedblom E."/>
            <person name="Cotton M.D."/>
            <person name="Utterback T.R."/>
            <person name="Hanna M.C."/>
            <person name="Nguyen D.T."/>
            <person name="Saudek D.M."/>
            <person name="Brandon R.C."/>
            <person name="Fine L.D."/>
            <person name="Fritchman J.L."/>
            <person name="Fuhrmann J.L."/>
            <person name="Geoghagen N.S.M."/>
            <person name="Gnehm C.L."/>
            <person name="McDonald L.A."/>
            <person name="Small K.V."/>
            <person name="Fraser C.M."/>
            <person name="Smith H.O."/>
            <person name="Venter J.C."/>
        </authorList>
    </citation>
    <scope>NUCLEOTIDE SEQUENCE [LARGE SCALE GENOMIC DNA]</scope>
    <source>
        <strain>ATCC 51907 / DSM 11121 / KW20 / Rd</strain>
    </source>
</reference>
<organism>
    <name type="scientific">Haemophilus influenzae (strain ATCC 51907 / DSM 11121 / KW20 / Rd)</name>
    <dbReference type="NCBI Taxonomy" id="71421"/>
    <lineage>
        <taxon>Bacteria</taxon>
        <taxon>Pseudomonadati</taxon>
        <taxon>Pseudomonadota</taxon>
        <taxon>Gammaproteobacteria</taxon>
        <taxon>Pasteurellales</taxon>
        <taxon>Pasteurellaceae</taxon>
        <taxon>Haemophilus</taxon>
    </lineage>
</organism>
<proteinExistence type="inferred from homology"/>
<name>CYSZ_HAEIN</name>
<sequence length="272" mass="31075">MLNLNELKSGFHYFVMGWHFITQKGLRRFVIMPIVLNTVLLCGLFWLFISQISSAIDWVMNFIPDWLSFLSVILLILSILTILLLFYFTFTTISGFIAAPFNGLLAEKVEKMLTGENINDDGLVDIMRDVPRMLAREWQKLRYSLPKIIALFLLSFIPLVGQTIVPVLTFLFTCWMMAIQYCDYPFDNHKVSFDIMKNVLGNQRTQSLTFGGLVTCCTFVPVINLLIMPVAVCGATLMWVENYRNDLGFNMNKSFSSQTGLDVRSENTGIVK</sequence>